<reference key="1">
    <citation type="submission" date="2011-07" db="EMBL/GenBank/DDBJ databases">
        <title>Complete genome sequence of Acetobacterium woodii.</title>
        <authorList>
            <person name="Poehlein A."/>
            <person name="Schmidt S."/>
            <person name="Kaster A.-K."/>
            <person name="Goenrich M."/>
            <person name="Vollmers J."/>
            <person name="Thuermer A."/>
            <person name="Gottschalk G."/>
            <person name="Thauer R.K."/>
            <person name="Daniel R."/>
            <person name="Mueller V."/>
        </authorList>
    </citation>
    <scope>NUCLEOTIDE SEQUENCE [LARGE SCALE GENOMIC DNA]</scope>
    <source>
        <strain>ATCC 29683 / DSM 1030 / JCM 2381 / KCTC 1655 / WB1</strain>
    </source>
</reference>
<reference key="2">
    <citation type="journal article" date="2013" name="J. Biol. Chem.">
        <title>An electron-bifurcating caffeyl-CoA reductase.</title>
        <authorList>
            <person name="Bertsch J."/>
            <person name="Parthasarathy A."/>
            <person name="Buckel W."/>
            <person name="Mueller V."/>
        </authorList>
    </citation>
    <scope>FUNCTION</scope>
    <scope>CATALYTIC ACTIVITY</scope>
    <scope>SUBCELLULAR LOCATION</scope>
    <scope>COFACTOR</scope>
    <scope>SUBSTRATE SPECIFICITY</scope>
    <scope>SUBUNIT</scope>
    <source>
        <strain>ATCC 29683 / DSM 1030 / JCM 2381 / KCTC 1655 / WB1</strain>
    </source>
</reference>
<proteinExistence type="evidence at protein level"/>
<comment type="function">
    <text evidence="2">The Caffeyl-CoA reductase-Etf complex catalyzes the reduction of caffeyl-CoA to yield hydrocaffeyl-CoA. It couples the endergonic ferredoxin reduction with NADH as reductant to the exergonic reduction of caffeoyl-CoA with the same reductant. It uses the mechanism of electron bifurcation to overcome the steep energy barrier in ferredoxin reduction. Also reduces 4-coumaroyl-CoA and feruloyl-CoA.</text>
</comment>
<comment type="catalytic activity">
    <reaction evidence="2">
        <text>hydrocaffeoyl-CoA + 2 reduced [2Fe-2S]-[ferredoxin] + 2 NAD(+) = (E)-caffeoyl-CoA + 2 oxidized [2Fe-2S]-[ferredoxin] + 2 NADH</text>
        <dbReference type="Rhea" id="RHEA:46956"/>
        <dbReference type="Rhea" id="RHEA-COMP:10000"/>
        <dbReference type="Rhea" id="RHEA-COMP:10001"/>
        <dbReference type="ChEBI" id="CHEBI:33737"/>
        <dbReference type="ChEBI" id="CHEBI:33738"/>
        <dbReference type="ChEBI" id="CHEBI:57540"/>
        <dbReference type="ChEBI" id="CHEBI:57945"/>
        <dbReference type="ChEBI" id="CHEBI:87136"/>
        <dbReference type="ChEBI" id="CHEBI:87137"/>
        <dbReference type="EC" id="1.3.1.108"/>
    </reaction>
</comment>
<comment type="cofactor">
    <cofactor evidence="2">
        <name>FAD</name>
        <dbReference type="ChEBI" id="CHEBI:57692"/>
    </cofactor>
    <text evidence="5">Binds 1 or 2 FAD per subunit.</text>
</comment>
<comment type="subunit">
    <text evidence="2">Part of the homotrimeric caffeyl-CoA reductase-Etf complex composed of (R)-2-hydroxyisocaproyl-CoA dehydratase CarC, and the electron transfer flavoprotein (ETF) alpha (CarE) and beta (CarD) subunits.</text>
</comment>
<comment type="subcellular location">
    <subcellularLocation>
        <location evidence="2">Cytoplasm</location>
    </subcellularLocation>
</comment>
<comment type="similarity">
    <text evidence="4">Belongs to the acyl-CoA dehydrogenase family.</text>
</comment>
<evidence type="ECO:0000250" key="1">
    <source>
        <dbReference type="UniProtKB" id="P15651"/>
    </source>
</evidence>
<evidence type="ECO:0000269" key="2">
    <source>
    </source>
</evidence>
<evidence type="ECO:0000303" key="3">
    <source>
    </source>
</evidence>
<evidence type="ECO:0000305" key="4"/>
<evidence type="ECO:0000305" key="5">
    <source>
    </source>
</evidence>
<evidence type="ECO:0007829" key="6">
    <source>
        <dbReference type="PDB" id="6FAH"/>
    </source>
</evidence>
<gene>
    <name evidence="3" type="primary">carC</name>
    <name type="ordered locus">Awo_c15720</name>
</gene>
<sequence>MYFSEQNKMIRKLARDFAEKELTTEILDEVEESGEFPQEILDKMAKFGFFGIKIPKSLGGSGGDHMSYVICMEEFARVSGVASVYLSSPNSLAGGPLLLSGTEEQIEKYLKPIITGKKKLAFALTEPGAGSDAGGMSTTAVDMGDYYLLNGRKTFITMAPLCDDAVIYAKTDMSKGTRGISAFIVDLKSEGVSMGKNEHKMGLIGCATSDIIMEDVKVPKENRLGEVNKGFSNAMKTLDVGRLGVASQSIGVAQGALDEAIKYAKERKQFGKRIADFQAIAFMIADMATKLEAAKLLVYNAASLMDNKKNATKEASMAKFYASEICNEICAKAVQIHGGYGYIKEYKVERMYRDCRVFTIYEGTSQVQQMVISGMLLKK</sequence>
<protein>
    <recommendedName>
        <fullName evidence="3">Caffeyl-CoA reductase-Etf complex subunit CarC</fullName>
        <ecNumber evidence="2">1.3.1.108</ecNumber>
    </recommendedName>
    <alternativeName>
        <fullName evidence="3">Caffeoyl-CoA reductase CarC</fullName>
    </alternativeName>
    <alternativeName>
        <fullName evidence="3">NADH-dependent caffeyl-CoA reduction</fullName>
    </alternativeName>
</protein>
<keyword id="KW-0002">3D-structure</keyword>
<keyword id="KW-0963">Cytoplasm</keyword>
<keyword id="KW-0274">FAD</keyword>
<keyword id="KW-0285">Flavoprotein</keyword>
<keyword id="KW-0520">NAD</keyword>
<keyword id="KW-0560">Oxidoreductase</keyword>
<keyword id="KW-1185">Reference proteome</keyword>
<feature type="chain" id="PRO_0000435668" description="Caffeyl-CoA reductase-Etf complex subunit CarC">
    <location>
        <begin position="1"/>
        <end position="379"/>
    </location>
</feature>
<feature type="active site" description="Proton acceptor" evidence="1">
    <location>
        <position position="362"/>
    </location>
</feature>
<feature type="binding site" description="in other chain" evidence="1">
    <location>
        <begin position="122"/>
        <end position="131"/>
    </location>
    <ligand>
        <name>FAD</name>
        <dbReference type="ChEBI" id="CHEBI:57692"/>
        <note>ligand shared between dimeric partners</note>
    </ligand>
</feature>
<feature type="binding site" evidence="1">
    <location>
        <position position="131"/>
    </location>
    <ligand>
        <name>substrate</name>
    </ligand>
</feature>
<feature type="binding site" description="in other chain" evidence="1">
    <location>
        <begin position="155"/>
        <end position="157"/>
    </location>
    <ligand>
        <name>FAD</name>
        <dbReference type="ChEBI" id="CHEBI:57692"/>
        <note>ligand shared between dimeric partners</note>
    </ligand>
</feature>
<feature type="binding site" evidence="1">
    <location>
        <begin position="239"/>
        <end position="242"/>
    </location>
    <ligand>
        <name>substrate</name>
    </ligand>
</feature>
<feature type="binding site" evidence="1">
    <location>
        <position position="267"/>
    </location>
    <ligand>
        <name>FAD</name>
        <dbReference type="ChEBI" id="CHEBI:57692"/>
        <note>ligand shared between dimeric partners</note>
    </ligand>
</feature>
<feature type="binding site" description="in other chain" evidence="1">
    <location>
        <position position="278"/>
    </location>
    <ligand>
        <name>FAD</name>
        <dbReference type="ChEBI" id="CHEBI:57692"/>
        <note>ligand shared between dimeric partners</note>
    </ligand>
</feature>
<feature type="binding site" evidence="1">
    <location>
        <begin position="335"/>
        <end position="339"/>
    </location>
    <ligand>
        <name>FAD</name>
        <dbReference type="ChEBI" id="CHEBI:57692"/>
        <note>ligand shared between dimeric partners</note>
    </ligand>
</feature>
<feature type="binding site" evidence="1">
    <location>
        <position position="363"/>
    </location>
    <ligand>
        <name>substrate</name>
    </ligand>
</feature>
<feature type="binding site" description="in other chain" evidence="1">
    <location>
        <begin position="364"/>
        <end position="366"/>
    </location>
    <ligand>
        <name>FAD</name>
        <dbReference type="ChEBI" id="CHEBI:57692"/>
        <note>ligand shared between dimeric partners</note>
    </ligand>
</feature>
<feature type="helix" evidence="6">
    <location>
        <begin position="5"/>
        <end position="21"/>
    </location>
</feature>
<feature type="helix" evidence="6">
    <location>
        <begin position="24"/>
        <end position="32"/>
    </location>
</feature>
<feature type="helix" evidence="6">
    <location>
        <begin position="38"/>
        <end position="46"/>
    </location>
</feature>
<feature type="helix" evidence="6">
    <location>
        <begin position="49"/>
        <end position="51"/>
    </location>
</feature>
<feature type="strand" evidence="6">
    <location>
        <begin position="52"/>
        <end position="54"/>
    </location>
</feature>
<feature type="helix" evidence="6">
    <location>
        <begin position="56"/>
        <end position="58"/>
    </location>
</feature>
<feature type="helix" evidence="6">
    <location>
        <begin position="65"/>
        <end position="78"/>
    </location>
</feature>
<feature type="helix" evidence="6">
    <location>
        <begin position="80"/>
        <end position="90"/>
    </location>
</feature>
<feature type="turn" evidence="6">
    <location>
        <begin position="91"/>
        <end position="93"/>
    </location>
</feature>
<feature type="helix" evidence="6">
    <location>
        <begin position="94"/>
        <end position="100"/>
    </location>
</feature>
<feature type="helix" evidence="6">
    <location>
        <begin position="103"/>
        <end position="114"/>
    </location>
</feature>
<feature type="strand" evidence="6">
    <location>
        <begin position="120"/>
        <end position="123"/>
    </location>
</feature>
<feature type="helix" evidence="6">
    <location>
        <begin position="133"/>
        <end position="135"/>
    </location>
</feature>
<feature type="strand" evidence="6">
    <location>
        <begin position="139"/>
        <end position="142"/>
    </location>
</feature>
<feature type="strand" evidence="6">
    <location>
        <begin position="144"/>
        <end position="157"/>
    </location>
</feature>
<feature type="helix" evidence="6">
    <location>
        <begin position="159"/>
        <end position="161"/>
    </location>
</feature>
<feature type="strand" evidence="6">
    <location>
        <begin position="163"/>
        <end position="172"/>
    </location>
</feature>
<feature type="turn" evidence="6">
    <location>
        <begin position="173"/>
        <end position="175"/>
    </location>
</feature>
<feature type="helix" evidence="6">
    <location>
        <begin position="176"/>
        <end position="178"/>
    </location>
</feature>
<feature type="strand" evidence="6">
    <location>
        <begin position="179"/>
        <end position="186"/>
    </location>
</feature>
<feature type="strand" evidence="6">
    <location>
        <begin position="189"/>
        <end position="191"/>
    </location>
</feature>
<feature type="strand" evidence="6">
    <location>
        <begin position="200"/>
        <end position="202"/>
    </location>
</feature>
<feature type="strand" evidence="6">
    <location>
        <begin position="208"/>
        <end position="219"/>
    </location>
</feature>
<feature type="helix" evidence="6">
    <location>
        <begin position="220"/>
        <end position="222"/>
    </location>
</feature>
<feature type="strand" evidence="6">
    <location>
        <begin position="223"/>
        <end position="226"/>
    </location>
</feature>
<feature type="helix" evidence="6">
    <location>
        <begin position="230"/>
        <end position="266"/>
    </location>
</feature>
<feature type="strand" evidence="6">
    <location>
        <begin position="268"/>
        <end position="273"/>
    </location>
</feature>
<feature type="helix" evidence="6">
    <location>
        <begin position="274"/>
        <end position="276"/>
    </location>
</feature>
<feature type="helix" evidence="6">
    <location>
        <begin position="278"/>
        <end position="306"/>
    </location>
</feature>
<feature type="helix" evidence="6">
    <location>
        <begin position="312"/>
        <end position="337"/>
    </location>
</feature>
<feature type="helix" evidence="6">
    <location>
        <begin position="338"/>
        <end position="342"/>
    </location>
</feature>
<feature type="helix" evidence="6">
    <location>
        <begin position="347"/>
        <end position="354"/>
    </location>
</feature>
<feature type="helix" evidence="6">
    <location>
        <begin position="355"/>
        <end position="359"/>
    </location>
</feature>
<feature type="strand" evidence="6">
    <location>
        <begin position="361"/>
        <end position="363"/>
    </location>
</feature>
<feature type="helix" evidence="6">
    <location>
        <begin position="365"/>
        <end position="376"/>
    </location>
</feature>
<dbReference type="EC" id="1.3.1.108" evidence="2"/>
<dbReference type="EMBL" id="CP002987">
    <property type="protein sequence ID" value="AFA48354.1"/>
    <property type="molecule type" value="Genomic_DNA"/>
</dbReference>
<dbReference type="RefSeq" id="WP_014355957.1">
    <property type="nucleotide sequence ID" value="NC_016894.1"/>
</dbReference>
<dbReference type="PDB" id="6FAH">
    <property type="method" value="X-ray"/>
    <property type="resolution" value="3.13 A"/>
    <property type="chains" value="C/D=1-379"/>
</dbReference>
<dbReference type="PDBsum" id="6FAH"/>
<dbReference type="SMR" id="H6LGM6"/>
<dbReference type="STRING" id="931626.Awo_c15720"/>
<dbReference type="KEGG" id="awo:Awo_c15720"/>
<dbReference type="eggNOG" id="COG1960">
    <property type="taxonomic scope" value="Bacteria"/>
</dbReference>
<dbReference type="HOGENOM" id="CLU_018204_0_2_9"/>
<dbReference type="OrthoDB" id="9802447at2"/>
<dbReference type="BioCyc" id="MetaCyc:MONOMER-21379"/>
<dbReference type="BRENDA" id="1.3.1.108">
    <property type="organism ID" value="52"/>
</dbReference>
<dbReference type="Proteomes" id="UP000007177">
    <property type="component" value="Chromosome"/>
</dbReference>
<dbReference type="GO" id="GO:0005737">
    <property type="term" value="C:cytoplasm"/>
    <property type="evidence" value="ECO:0007669"/>
    <property type="project" value="UniProtKB-SubCell"/>
</dbReference>
<dbReference type="GO" id="GO:0003995">
    <property type="term" value="F:acyl-CoA dehydrogenase activity"/>
    <property type="evidence" value="ECO:0007669"/>
    <property type="project" value="InterPro"/>
</dbReference>
<dbReference type="GO" id="GO:0071949">
    <property type="term" value="F:FAD binding"/>
    <property type="evidence" value="ECO:0000314"/>
    <property type="project" value="UniProtKB"/>
</dbReference>
<dbReference type="GO" id="GO:0016628">
    <property type="term" value="F:oxidoreductase activity, acting on the CH-CH group of donors, NAD or NADP as acceptor"/>
    <property type="evidence" value="ECO:0000314"/>
    <property type="project" value="UniProtKB"/>
</dbReference>
<dbReference type="FunFam" id="1.10.540.10:FF:000002">
    <property type="entry name" value="Acyl-CoA dehydrogenase FadE19"/>
    <property type="match status" value="1"/>
</dbReference>
<dbReference type="FunFam" id="1.20.140.10:FF:000004">
    <property type="entry name" value="Acyl-CoA dehydrogenase FadE25"/>
    <property type="match status" value="1"/>
</dbReference>
<dbReference type="FunFam" id="2.40.110.10:FF:000001">
    <property type="entry name" value="Acyl-CoA dehydrogenase, mitochondrial"/>
    <property type="match status" value="1"/>
</dbReference>
<dbReference type="Gene3D" id="1.10.540.10">
    <property type="entry name" value="Acyl-CoA dehydrogenase/oxidase, N-terminal domain"/>
    <property type="match status" value="1"/>
</dbReference>
<dbReference type="Gene3D" id="2.40.110.10">
    <property type="entry name" value="Butyryl-CoA Dehydrogenase, subunit A, domain 2"/>
    <property type="match status" value="1"/>
</dbReference>
<dbReference type="Gene3D" id="1.20.140.10">
    <property type="entry name" value="Butyryl-CoA Dehydrogenase, subunit A, domain 3"/>
    <property type="match status" value="1"/>
</dbReference>
<dbReference type="InterPro" id="IPR006089">
    <property type="entry name" value="Acyl-CoA_DH_CS"/>
</dbReference>
<dbReference type="InterPro" id="IPR006091">
    <property type="entry name" value="Acyl-CoA_Oxase/DH_mid-dom"/>
</dbReference>
<dbReference type="InterPro" id="IPR046373">
    <property type="entry name" value="Acyl-CoA_Oxase/DH_mid-dom_sf"/>
</dbReference>
<dbReference type="InterPro" id="IPR036250">
    <property type="entry name" value="AcylCo_DH-like_C"/>
</dbReference>
<dbReference type="InterPro" id="IPR009075">
    <property type="entry name" value="AcylCo_DH/oxidase_C"/>
</dbReference>
<dbReference type="InterPro" id="IPR013786">
    <property type="entry name" value="AcylCoA_DH/ox_N"/>
</dbReference>
<dbReference type="InterPro" id="IPR037069">
    <property type="entry name" value="AcylCoA_DH/ox_N_sf"/>
</dbReference>
<dbReference type="InterPro" id="IPR009100">
    <property type="entry name" value="AcylCoA_DH/oxidase_NM_dom_sf"/>
</dbReference>
<dbReference type="PANTHER" id="PTHR43884">
    <property type="entry name" value="ACYL-COA DEHYDROGENASE"/>
    <property type="match status" value="1"/>
</dbReference>
<dbReference type="PANTHER" id="PTHR43884:SF12">
    <property type="entry name" value="ISOVALERYL-COA DEHYDROGENASE, MITOCHONDRIAL-RELATED"/>
    <property type="match status" value="1"/>
</dbReference>
<dbReference type="Pfam" id="PF00441">
    <property type="entry name" value="Acyl-CoA_dh_1"/>
    <property type="match status" value="1"/>
</dbReference>
<dbReference type="Pfam" id="PF02770">
    <property type="entry name" value="Acyl-CoA_dh_M"/>
    <property type="match status" value="1"/>
</dbReference>
<dbReference type="Pfam" id="PF02771">
    <property type="entry name" value="Acyl-CoA_dh_N"/>
    <property type="match status" value="1"/>
</dbReference>
<dbReference type="PIRSF" id="PIRSF016578">
    <property type="entry name" value="HsaA"/>
    <property type="match status" value="1"/>
</dbReference>
<dbReference type="SUPFAM" id="SSF47203">
    <property type="entry name" value="Acyl-CoA dehydrogenase C-terminal domain-like"/>
    <property type="match status" value="1"/>
</dbReference>
<dbReference type="SUPFAM" id="SSF56645">
    <property type="entry name" value="Acyl-CoA dehydrogenase NM domain-like"/>
    <property type="match status" value="1"/>
</dbReference>
<dbReference type="PROSITE" id="PS00072">
    <property type="entry name" value="ACYL_COA_DH_1"/>
    <property type="match status" value="1"/>
</dbReference>
<dbReference type="PROSITE" id="PS00073">
    <property type="entry name" value="ACYL_COA_DH_2"/>
    <property type="match status" value="1"/>
</dbReference>
<accession>H6LGM6</accession>
<organism>
    <name type="scientific">Acetobacterium woodii (strain ATCC 29683 / DSM 1030 / JCM 2381 / KCTC 1655 / WB1)</name>
    <dbReference type="NCBI Taxonomy" id="931626"/>
    <lineage>
        <taxon>Bacteria</taxon>
        <taxon>Bacillati</taxon>
        <taxon>Bacillota</taxon>
        <taxon>Clostridia</taxon>
        <taxon>Eubacteriales</taxon>
        <taxon>Eubacteriaceae</taxon>
        <taxon>Acetobacterium</taxon>
    </lineage>
</organism>
<name>CARC_ACEWD</name>